<organismHost>
    <name type="scientific">Sus scrofa</name>
    <name type="common">Pig</name>
    <dbReference type="NCBI Taxonomy" id="9823"/>
</organismHost>
<evidence type="ECO:0000305" key="1"/>
<dbReference type="EMBL" id="AY078417">
    <property type="protein sequence ID" value="AAL80032.1"/>
    <property type="molecule type" value="Genomic_RNA"/>
</dbReference>
<dbReference type="Proteomes" id="UP000007546">
    <property type="component" value="Genome"/>
</dbReference>
<name>NS49_CVP67</name>
<accession>P0C2P9</accession>
<accession>Q8JSP7</accession>
<reference key="1">
    <citation type="journal article" date="2002" name="J. Gen. Virol.">
        <title>Sequence of the 3'-terminal end (8.1 kb) of the genome of porcine haemagglutinating encephalomyelitis virus: comparison with other haemagglutinating coronaviruses.</title>
        <authorList>
            <person name="Sasseville A.M.-J."/>
            <person name="Boutin M."/>
            <person name="Gelinas A.-M."/>
            <person name="Dea S."/>
        </authorList>
    </citation>
    <scope>NUCLEOTIDE SEQUENCE [GENOMIC RNA]</scope>
</reference>
<keyword id="KW-1185">Reference proteome</keyword>
<comment type="similarity">
    <text evidence="1">Belongs to the coronaviruses ns4.9 protein family.</text>
</comment>
<sequence>MTINFVFGFHIVTLSICQSF</sequence>
<protein>
    <recommendedName>
        <fullName>Truncated non-structural protein of 4.9 kDa</fullName>
        <shortName>Truncated ns4.9</shortName>
    </recommendedName>
    <alternativeName>
        <fullName>Truncated 4.9 kDa accessory protein</fullName>
    </alternativeName>
</protein>
<proteinExistence type="inferred from homology"/>
<feature type="chain" id="PRO_0000283946" description="Truncated non-structural protein of 4.9 kDa">
    <location>
        <begin position="1"/>
        <end position="20"/>
    </location>
</feature>
<organism>
    <name type="scientific">Porcine hemagglutinating encephalomyelitis virus (strain 67N)</name>
    <name type="common">HEV-67N</name>
    <dbReference type="NCBI Taxonomy" id="230237"/>
    <lineage>
        <taxon>Viruses</taxon>
        <taxon>Riboviria</taxon>
        <taxon>Orthornavirae</taxon>
        <taxon>Pisuviricota</taxon>
        <taxon>Pisoniviricetes</taxon>
        <taxon>Nidovirales</taxon>
        <taxon>Cornidovirineae</taxon>
        <taxon>Coronaviridae</taxon>
        <taxon>Orthocoronavirinae</taxon>
        <taxon>Betacoronavirus</taxon>
        <taxon>Embecovirus</taxon>
        <taxon>Betacoronavirus 1</taxon>
    </lineage>
</organism>